<keyword id="KW-0119">Carbohydrate metabolism</keyword>
<keyword id="KW-0963">Cytoplasm</keyword>
<keyword id="KW-0378">Hydrolase</keyword>
<keyword id="KW-0460">Magnesium</keyword>
<keyword id="KW-0479">Metal-binding</keyword>
<keyword id="KW-1185">Reference proteome</keyword>
<keyword id="KW-0862">Zinc</keyword>
<proteinExistence type="inferred from homology"/>
<gene>
    <name type="primary">gmhB</name>
    <name type="synonym">gmhX</name>
    <name type="ordered locus">NMB2033</name>
</gene>
<protein>
    <recommendedName>
        <fullName>D-glycero-beta-D-manno-heptose-1,7-bisphosphate 7-phosphatase</fullName>
        <ecNumber>3.1.3.82</ecNumber>
    </recommendedName>
    <alternativeName>
        <fullName>D,D-heptose 1,7-bisphosphate phosphatase</fullName>
        <shortName>HBP phosphatase</shortName>
    </alternativeName>
</protein>
<comment type="function">
    <text evidence="4">Converts the D-glycero-beta-D-manno-heptose 1,7-bisphosphate intermediate into D-glycero-beta-D-manno-heptose 1-phosphate by removing the phosphate group at the C-7 position.</text>
</comment>
<comment type="catalytic activity">
    <reaction>
        <text>D-glycero-beta-D-manno-heptose 1,7-bisphosphate + H2O = D-glycero-beta-D-manno-heptose 1-phosphate + phosphate</text>
        <dbReference type="Rhea" id="RHEA:28518"/>
        <dbReference type="ChEBI" id="CHEBI:15377"/>
        <dbReference type="ChEBI" id="CHEBI:43474"/>
        <dbReference type="ChEBI" id="CHEBI:60208"/>
        <dbReference type="ChEBI" id="CHEBI:61593"/>
        <dbReference type="EC" id="3.1.3.82"/>
    </reaction>
</comment>
<comment type="cofactor">
    <cofactor evidence="1">
        <name>Mg(2+)</name>
        <dbReference type="ChEBI" id="CHEBI:18420"/>
    </cofactor>
</comment>
<comment type="cofactor">
    <cofactor evidence="1">
        <name>Zn(2+)</name>
        <dbReference type="ChEBI" id="CHEBI:29105"/>
    </cofactor>
</comment>
<comment type="pathway">
    <text>Nucleotide-sugar biosynthesis; ADP-L-glycero-beta-D-manno-heptose biosynthesis; ADP-L-glycero-beta-D-manno-heptose from D-glycero-beta-D-manno-heptose 7-phosphate: step 2/4.</text>
</comment>
<comment type="pathway">
    <text>Bacterial outer membrane biogenesis; LOS core biosynthesis.</text>
</comment>
<comment type="subunit">
    <text evidence="1">Monomer.</text>
</comment>
<comment type="subcellular location">
    <subcellularLocation>
        <location evidence="1">Cytoplasm</location>
    </subcellularLocation>
</comment>
<comment type="similarity">
    <text evidence="3">Belongs to the GmhB family.</text>
</comment>
<accession>Q9JXI5</accession>
<name>GMHBB_NEIMB</name>
<organism>
    <name type="scientific">Neisseria meningitidis serogroup B (strain ATCC BAA-335 / MC58)</name>
    <dbReference type="NCBI Taxonomy" id="122586"/>
    <lineage>
        <taxon>Bacteria</taxon>
        <taxon>Pseudomonadati</taxon>
        <taxon>Pseudomonadota</taxon>
        <taxon>Betaproteobacteria</taxon>
        <taxon>Neisseriales</taxon>
        <taxon>Neisseriaceae</taxon>
        <taxon>Neisseria</taxon>
    </lineage>
</organism>
<evidence type="ECO:0000250" key="1"/>
<evidence type="ECO:0000250" key="2">
    <source>
        <dbReference type="UniProtKB" id="Q7WG29"/>
    </source>
</evidence>
<evidence type="ECO:0000305" key="3"/>
<evidence type="ECO:0000305" key="4">
    <source>
    </source>
</evidence>
<sequence>MKLIILDRDGVINQDRDDFVKSVDEWIPVEGSMDAVAFLTQAGYTVAVATNQSGIGRKYFTVQNLTEMHAKMHRLVRQAGGEINGIWFCPHTDADNCNCRKPKPGMIEDIIGRFNAQASETWLVGDSLRDLQAIDAVGGKPALVLTGKGKKTLSQHGHELPEHTQVFDTLLDFSQYIMQENTAPQAD</sequence>
<reference key="1">
    <citation type="journal article" date="2000" name="Science">
        <title>Complete genome sequence of Neisseria meningitidis serogroup B strain MC58.</title>
        <authorList>
            <person name="Tettelin H."/>
            <person name="Saunders N.J."/>
            <person name="Heidelberg J.F."/>
            <person name="Jeffries A.C."/>
            <person name="Nelson K.E."/>
            <person name="Eisen J.A."/>
            <person name="Ketchum K.A."/>
            <person name="Hood D.W."/>
            <person name="Peden J.F."/>
            <person name="Dodson R.J."/>
            <person name="Nelson W.C."/>
            <person name="Gwinn M.L."/>
            <person name="DeBoy R.T."/>
            <person name="Peterson J.D."/>
            <person name="Hickey E.K."/>
            <person name="Haft D.H."/>
            <person name="Salzberg S.L."/>
            <person name="White O."/>
            <person name="Fleischmann R.D."/>
            <person name="Dougherty B.A."/>
            <person name="Mason T.M."/>
            <person name="Ciecko A."/>
            <person name="Parksey D.S."/>
            <person name="Blair E."/>
            <person name="Cittone H."/>
            <person name="Clark E.B."/>
            <person name="Cotton M.D."/>
            <person name="Utterback T.R."/>
            <person name="Khouri H.M."/>
            <person name="Qin H."/>
            <person name="Vamathevan J.J."/>
            <person name="Gill J."/>
            <person name="Scarlato V."/>
            <person name="Masignani V."/>
            <person name="Pizza M."/>
            <person name="Grandi G."/>
            <person name="Sun L."/>
            <person name="Smith H.O."/>
            <person name="Fraser C.M."/>
            <person name="Moxon E.R."/>
            <person name="Rappuoli R."/>
            <person name="Venter J.C."/>
        </authorList>
    </citation>
    <scope>NUCLEOTIDE SEQUENCE [LARGE SCALE GENOMIC DNA]</scope>
    <source>
        <strain>ATCC BAA-335 / MC58</strain>
    </source>
</reference>
<reference key="2">
    <citation type="journal article" date="2001" name="Microbiology">
        <title>gmhX, a novel gene required for the incorporation of L-glycero-D-manno-heptose into lipooligosaccharide in Neisseria meningitidis.</title>
        <authorList>
            <person name="Shih G.C."/>
            <person name="Kahler C.M."/>
            <person name="Carlson R.W."/>
            <person name="Rahman M.M."/>
            <person name="Stephens D.S."/>
        </authorList>
    </citation>
    <scope>ROLE IN HEPTOSE ASSEMBLY</scope>
    <source>
        <strain>NMB / Serogroup B</strain>
    </source>
</reference>
<reference key="3">
    <citation type="journal article" date="2002" name="Microbiology">
        <title>Novel pathways for biosynthesis of nucleotide-activated glycero-manno-heptose precursors of bacterial glycoproteins and cell surface polysaccharides.</title>
        <authorList>
            <person name="Valvano M.A."/>
            <person name="Messner P."/>
            <person name="Kosma P."/>
        </authorList>
    </citation>
    <scope>BIOSYNTHESIS OF NUCLEOTIDE-ACTIVATED GLYCERO-MANNO-HEPTOSE</scope>
</reference>
<feature type="chain" id="PRO_0000209399" description="D-glycero-beta-D-manno-heptose-1,7-bisphosphate 7-phosphatase">
    <location>
        <begin position="1"/>
        <end position="187"/>
    </location>
</feature>
<feature type="active site" description="Nucleophile" evidence="1">
    <location>
        <position position="7"/>
    </location>
</feature>
<feature type="active site" description="Proton donor" evidence="1">
    <location>
        <position position="9"/>
    </location>
</feature>
<feature type="binding site" evidence="1">
    <location>
        <begin position="7"/>
        <end position="9"/>
    </location>
    <ligand>
        <name>substrate</name>
    </ligand>
</feature>
<feature type="binding site" evidence="2">
    <location>
        <position position="7"/>
    </location>
    <ligand>
        <name>Mg(2+)</name>
        <dbReference type="ChEBI" id="CHEBI:18420"/>
    </ligand>
</feature>
<feature type="binding site" evidence="2">
    <location>
        <position position="9"/>
    </location>
    <ligand>
        <name>Mg(2+)</name>
        <dbReference type="ChEBI" id="CHEBI:18420"/>
    </ligand>
</feature>
<feature type="binding site" evidence="1">
    <location>
        <begin position="15"/>
        <end position="19"/>
    </location>
    <ligand>
        <name>substrate</name>
    </ligand>
</feature>
<feature type="binding site" evidence="1">
    <location>
        <begin position="50"/>
        <end position="53"/>
    </location>
    <ligand>
        <name>substrate</name>
    </ligand>
</feature>
<feature type="binding site" evidence="2">
    <location>
        <position position="89"/>
    </location>
    <ligand>
        <name>Zn(2+)</name>
        <dbReference type="ChEBI" id="CHEBI:29105"/>
    </ligand>
</feature>
<feature type="binding site" evidence="2">
    <location>
        <position position="91"/>
    </location>
    <ligand>
        <name>Zn(2+)</name>
        <dbReference type="ChEBI" id="CHEBI:29105"/>
    </ligand>
</feature>
<feature type="binding site" evidence="2">
    <location>
        <position position="97"/>
    </location>
    <ligand>
        <name>Zn(2+)</name>
        <dbReference type="ChEBI" id="CHEBI:29105"/>
    </ligand>
</feature>
<feature type="binding site" evidence="2">
    <location>
        <position position="99"/>
    </location>
    <ligand>
        <name>Zn(2+)</name>
        <dbReference type="ChEBI" id="CHEBI:29105"/>
    </ligand>
</feature>
<feature type="binding site" evidence="1">
    <location>
        <begin position="100"/>
        <end position="101"/>
    </location>
    <ligand>
        <name>substrate</name>
    </ligand>
</feature>
<feature type="binding site" evidence="2">
    <location>
        <position position="126"/>
    </location>
    <ligand>
        <name>Mg(2+)</name>
        <dbReference type="ChEBI" id="CHEBI:18420"/>
    </ligand>
</feature>
<feature type="site" description="Stabilizes the phosphoryl group" evidence="1">
    <location>
        <position position="50"/>
    </location>
</feature>
<feature type="site" description="Contributes to substrate recognition" evidence="1">
    <location>
        <position position="100"/>
    </location>
</feature>
<feature type="site" description="Stabilizes the phosphoryl group" evidence="1">
    <location>
        <position position="101"/>
    </location>
</feature>
<dbReference type="EC" id="3.1.3.82"/>
<dbReference type="EMBL" id="AE002098">
    <property type="protein sequence ID" value="AAF42354.1"/>
    <property type="molecule type" value="Genomic_DNA"/>
</dbReference>
<dbReference type="PIR" id="F81013">
    <property type="entry name" value="F81013"/>
</dbReference>
<dbReference type="RefSeq" id="NP_275024.1">
    <property type="nucleotide sequence ID" value="NC_003112.2"/>
</dbReference>
<dbReference type="RefSeq" id="WP_002224688.1">
    <property type="nucleotide sequence ID" value="NC_003112.2"/>
</dbReference>
<dbReference type="SMR" id="Q9JXI5"/>
<dbReference type="FunCoup" id="Q9JXI5">
    <property type="interactions" value="215"/>
</dbReference>
<dbReference type="STRING" id="122586.NMB2033"/>
<dbReference type="PaxDb" id="122586-NMB2033"/>
<dbReference type="KEGG" id="nme:NMB2033"/>
<dbReference type="PATRIC" id="fig|122586.8.peg.2592"/>
<dbReference type="HOGENOM" id="CLU_085077_2_0_4"/>
<dbReference type="InParanoid" id="Q9JXI5"/>
<dbReference type="OrthoDB" id="9781367at2"/>
<dbReference type="UniPathway" id="UPA00356">
    <property type="reaction ID" value="UER00438"/>
</dbReference>
<dbReference type="UniPathway" id="UPA00976"/>
<dbReference type="Proteomes" id="UP000000425">
    <property type="component" value="Chromosome"/>
</dbReference>
<dbReference type="GO" id="GO:0005737">
    <property type="term" value="C:cytoplasm"/>
    <property type="evidence" value="ECO:0007669"/>
    <property type="project" value="UniProtKB-SubCell"/>
</dbReference>
<dbReference type="GO" id="GO:0034200">
    <property type="term" value="F:D-glycero-beta-D-manno-heptose 1,7-bisphosphate 7-phosphatase activity"/>
    <property type="evidence" value="ECO:0000250"/>
    <property type="project" value="UniProtKB"/>
</dbReference>
<dbReference type="GO" id="GO:0000287">
    <property type="term" value="F:magnesium ion binding"/>
    <property type="evidence" value="ECO:0000250"/>
    <property type="project" value="UniProtKB"/>
</dbReference>
<dbReference type="GO" id="GO:0008270">
    <property type="term" value="F:zinc ion binding"/>
    <property type="evidence" value="ECO:0000250"/>
    <property type="project" value="UniProtKB"/>
</dbReference>
<dbReference type="GO" id="GO:0097171">
    <property type="term" value="P:ADP-L-glycero-beta-D-manno-heptose biosynthetic process"/>
    <property type="evidence" value="ECO:0007669"/>
    <property type="project" value="UniProtKB-UniPathway"/>
</dbReference>
<dbReference type="GO" id="GO:0009103">
    <property type="term" value="P:lipopolysaccharide biosynthetic process"/>
    <property type="evidence" value="ECO:0000315"/>
    <property type="project" value="CACAO"/>
</dbReference>
<dbReference type="CDD" id="cd07503">
    <property type="entry name" value="HAD_HisB-N"/>
    <property type="match status" value="1"/>
</dbReference>
<dbReference type="FunFam" id="3.40.50.1000:FF:000168">
    <property type="entry name" value="D,D-heptose 1,7-bisphosphate phosphatase"/>
    <property type="match status" value="1"/>
</dbReference>
<dbReference type="Gene3D" id="3.40.50.1000">
    <property type="entry name" value="HAD superfamily/HAD-like"/>
    <property type="match status" value="1"/>
</dbReference>
<dbReference type="InterPro" id="IPR036412">
    <property type="entry name" value="HAD-like_sf"/>
</dbReference>
<dbReference type="InterPro" id="IPR006549">
    <property type="entry name" value="HAD-SF_hydro_IIIA"/>
</dbReference>
<dbReference type="InterPro" id="IPR023214">
    <property type="entry name" value="HAD_sf"/>
</dbReference>
<dbReference type="InterPro" id="IPR004446">
    <property type="entry name" value="Heptose_bisP_phosphatase"/>
</dbReference>
<dbReference type="InterPro" id="IPR006543">
    <property type="entry name" value="Histidinol-phos"/>
</dbReference>
<dbReference type="NCBIfam" id="TIGR01662">
    <property type="entry name" value="HAD-SF-IIIA"/>
    <property type="match status" value="1"/>
</dbReference>
<dbReference type="NCBIfam" id="TIGR01656">
    <property type="entry name" value="Histidinol-ppas"/>
    <property type="match status" value="1"/>
</dbReference>
<dbReference type="NCBIfam" id="NF006506">
    <property type="entry name" value="PRK08942.1"/>
    <property type="match status" value="1"/>
</dbReference>
<dbReference type="PANTHER" id="PTHR42891">
    <property type="entry name" value="D-GLYCERO-BETA-D-MANNO-HEPTOSE-1,7-BISPHOSPHATE 7-PHOSPHATASE"/>
    <property type="match status" value="1"/>
</dbReference>
<dbReference type="PANTHER" id="PTHR42891:SF1">
    <property type="entry name" value="D-GLYCERO-BETA-D-MANNO-HEPTOSE-1,7-BISPHOSPHATE 7-PHOSPHATASE"/>
    <property type="match status" value="1"/>
</dbReference>
<dbReference type="Pfam" id="PF00702">
    <property type="entry name" value="Hydrolase"/>
    <property type="match status" value="1"/>
</dbReference>
<dbReference type="PIRSF" id="PIRSF004682">
    <property type="entry name" value="GmhB"/>
    <property type="match status" value="1"/>
</dbReference>
<dbReference type="SUPFAM" id="SSF56784">
    <property type="entry name" value="HAD-like"/>
    <property type="match status" value="1"/>
</dbReference>